<accession>A5HZD5</accession>
<accession>A7G192</accession>
<evidence type="ECO:0000255" key="1">
    <source>
        <dbReference type="HAMAP-Rule" id="MF_01515"/>
    </source>
</evidence>
<proteinExistence type="inferred from homology"/>
<organism>
    <name type="scientific">Clostridium botulinum (strain Hall / ATCC 3502 / NCTC 13319 / Type A)</name>
    <dbReference type="NCBI Taxonomy" id="441771"/>
    <lineage>
        <taxon>Bacteria</taxon>
        <taxon>Bacillati</taxon>
        <taxon>Bacillota</taxon>
        <taxon>Clostridia</taxon>
        <taxon>Eubacteriales</taxon>
        <taxon>Clostridiaceae</taxon>
        <taxon>Clostridium</taxon>
    </lineage>
</organism>
<dbReference type="EMBL" id="CP000727">
    <property type="protein sequence ID" value="ABS38392.1"/>
    <property type="molecule type" value="Genomic_DNA"/>
</dbReference>
<dbReference type="EMBL" id="AM412317">
    <property type="protein sequence ID" value="CAL82144.1"/>
    <property type="molecule type" value="Genomic_DNA"/>
</dbReference>
<dbReference type="RefSeq" id="WP_003357138.1">
    <property type="nucleotide sequence ID" value="NC_009698.1"/>
</dbReference>
<dbReference type="RefSeq" id="YP_001253133.1">
    <property type="nucleotide sequence ID" value="NC_009495.1"/>
</dbReference>
<dbReference type="RefSeq" id="YP_001386526.1">
    <property type="nucleotide sequence ID" value="NC_009698.1"/>
</dbReference>
<dbReference type="SMR" id="A5HZD5"/>
<dbReference type="GeneID" id="5184846"/>
<dbReference type="KEGG" id="cbh:CLC_0646"/>
<dbReference type="KEGG" id="cbo:CBO0591"/>
<dbReference type="PATRIC" id="fig|413999.7.peg.591"/>
<dbReference type="HOGENOM" id="CLU_106166_0_0_9"/>
<dbReference type="PRO" id="PR:A5HZD5"/>
<dbReference type="Proteomes" id="UP000001986">
    <property type="component" value="Chromosome"/>
</dbReference>
<dbReference type="GO" id="GO:0005886">
    <property type="term" value="C:plasma membrane"/>
    <property type="evidence" value="ECO:0007669"/>
    <property type="project" value="UniProtKB-SubCell"/>
</dbReference>
<dbReference type="CDD" id="cd16381">
    <property type="entry name" value="YitT_C_like_1"/>
    <property type="match status" value="1"/>
</dbReference>
<dbReference type="HAMAP" id="MF_01515">
    <property type="entry name" value="UPF0316"/>
    <property type="match status" value="1"/>
</dbReference>
<dbReference type="InterPro" id="IPR019264">
    <property type="entry name" value="DUF2179"/>
</dbReference>
<dbReference type="InterPro" id="IPR044035">
    <property type="entry name" value="DUF5698"/>
</dbReference>
<dbReference type="InterPro" id="IPR022930">
    <property type="entry name" value="UPF0316"/>
</dbReference>
<dbReference type="PANTHER" id="PTHR40060">
    <property type="entry name" value="UPF0316 PROTEIN YEBE"/>
    <property type="match status" value="1"/>
</dbReference>
<dbReference type="PANTHER" id="PTHR40060:SF1">
    <property type="entry name" value="UPF0316 PROTEIN YEBE"/>
    <property type="match status" value="1"/>
</dbReference>
<dbReference type="Pfam" id="PF10035">
    <property type="entry name" value="DUF2179"/>
    <property type="match status" value="1"/>
</dbReference>
<dbReference type="Pfam" id="PF18955">
    <property type="entry name" value="DUF5698"/>
    <property type="match status" value="1"/>
</dbReference>
<protein>
    <recommendedName>
        <fullName evidence="1">UPF0316 protein CBO0591/CLC_0646</fullName>
    </recommendedName>
</protein>
<feature type="chain" id="PRO_0000315257" description="UPF0316 protein CBO0591/CLC_0646">
    <location>
        <begin position="1"/>
        <end position="170"/>
    </location>
</feature>
<feature type="transmembrane region" description="Helical" evidence="1">
    <location>
        <begin position="1"/>
        <end position="21"/>
    </location>
</feature>
<feature type="transmembrane region" description="Helical" evidence="1">
    <location>
        <begin position="36"/>
        <end position="56"/>
    </location>
</feature>
<reference key="1">
    <citation type="journal article" date="2007" name="Genome Res.">
        <title>Genome sequence of a proteolytic (Group I) Clostridium botulinum strain Hall A and comparative analysis of the clostridial genomes.</title>
        <authorList>
            <person name="Sebaihia M."/>
            <person name="Peck M.W."/>
            <person name="Minton N.P."/>
            <person name="Thomson N.R."/>
            <person name="Holden M.T.G."/>
            <person name="Mitchell W.J."/>
            <person name="Carter A.T."/>
            <person name="Bentley S.D."/>
            <person name="Mason D.R."/>
            <person name="Crossman L."/>
            <person name="Paul C.J."/>
            <person name="Ivens A."/>
            <person name="Wells-Bennik M.H.J."/>
            <person name="Davis I.J."/>
            <person name="Cerdeno-Tarraga A.M."/>
            <person name="Churcher C."/>
            <person name="Quail M.A."/>
            <person name="Chillingworth T."/>
            <person name="Feltwell T."/>
            <person name="Fraser A."/>
            <person name="Goodhead I."/>
            <person name="Hance Z."/>
            <person name="Jagels K."/>
            <person name="Larke N."/>
            <person name="Maddison M."/>
            <person name="Moule S."/>
            <person name="Mungall K."/>
            <person name="Norbertczak H."/>
            <person name="Rabbinowitsch E."/>
            <person name="Sanders M."/>
            <person name="Simmonds M."/>
            <person name="White B."/>
            <person name="Whithead S."/>
            <person name="Parkhill J."/>
        </authorList>
    </citation>
    <scope>NUCLEOTIDE SEQUENCE [LARGE SCALE GENOMIC DNA]</scope>
    <source>
        <strain>Hall / ATCC 3502 / NCTC 13319 / Type A</strain>
    </source>
</reference>
<reference key="2">
    <citation type="journal article" date="2007" name="PLoS ONE">
        <title>Analysis of the neurotoxin complex genes in Clostridium botulinum A1-A4 and B1 strains: BoNT/A3, /Ba4 and /B1 clusters are located within plasmids.</title>
        <authorList>
            <person name="Smith T.J."/>
            <person name="Hill K.K."/>
            <person name="Foley B.T."/>
            <person name="Detter J.C."/>
            <person name="Munk A.C."/>
            <person name="Bruce D.C."/>
            <person name="Doggett N.A."/>
            <person name="Smith L.A."/>
            <person name="Marks J.D."/>
            <person name="Xie G."/>
            <person name="Brettin T.S."/>
        </authorList>
    </citation>
    <scope>NUCLEOTIDE SEQUENCE [LARGE SCALE GENOMIC DNA]</scope>
    <source>
        <strain>Hall / ATCC 3502 / NCTC 13319 / Type A</strain>
    </source>
</reference>
<comment type="subcellular location">
    <subcellularLocation>
        <location evidence="1">Cell membrane</location>
        <topology evidence="1">Multi-pass membrane protein</topology>
    </subcellularLocation>
</comment>
<comment type="similarity">
    <text evidence="1">Belongs to the UPF0316 family.</text>
</comment>
<keyword id="KW-1003">Cell membrane</keyword>
<keyword id="KW-0472">Membrane</keyword>
<keyword id="KW-1185">Reference proteome</keyword>
<keyword id="KW-0812">Transmembrane</keyword>
<keyword id="KW-1133">Transmembrane helix</keyword>
<name>Y591_CLOBH</name>
<sequence>MLSYYAFIFFAKIMEVALMTIRTVLITRGEKLYGSIIGFIEVTIWLYVTSSVLSGIKDDPIRMVVYALGFTCGNYMGCVIEEKLAIGLLTINVITSESDGKRLAEILRDENVGVTMVDAEGKIEQKKMLIIHAKRKRREEIIRTIEGSDINAMISVNDIKTVYGGYGIRK</sequence>
<gene>
    <name type="ordered locus">CBO0591</name>
    <name type="ordered locus">CLC_0646</name>
</gene>